<reference key="1">
    <citation type="journal article" date="2008" name="J. Bacteriol.">
        <title>The pangenome structure of Escherichia coli: comparative genomic analysis of E. coli commensal and pathogenic isolates.</title>
        <authorList>
            <person name="Rasko D.A."/>
            <person name="Rosovitz M.J."/>
            <person name="Myers G.S.A."/>
            <person name="Mongodin E.F."/>
            <person name="Fricke W.F."/>
            <person name="Gajer P."/>
            <person name="Crabtree J."/>
            <person name="Sebaihia M."/>
            <person name="Thomson N.R."/>
            <person name="Chaudhuri R."/>
            <person name="Henderson I.R."/>
            <person name="Sperandio V."/>
            <person name="Ravel J."/>
        </authorList>
    </citation>
    <scope>NUCLEOTIDE SEQUENCE [LARGE SCALE GENOMIC DNA]</scope>
    <source>
        <strain>E24377A / ETEC</strain>
    </source>
</reference>
<comment type="function">
    <text evidence="1">Catalyzes the reversible aldol cleavage of N-acetylneuraminic acid (sialic acid; Neu5Ac) to form pyruvate and N-acetylmannosamine (ManNAc) via a Schiff base intermediate.</text>
</comment>
<comment type="catalytic activity">
    <reaction evidence="1">
        <text>aceneuramate = aldehydo-N-acetyl-D-mannosamine + pyruvate</text>
        <dbReference type="Rhea" id="RHEA:23296"/>
        <dbReference type="ChEBI" id="CHEBI:15361"/>
        <dbReference type="ChEBI" id="CHEBI:17122"/>
        <dbReference type="ChEBI" id="CHEBI:173083"/>
        <dbReference type="EC" id="4.1.3.3"/>
    </reaction>
</comment>
<comment type="pathway">
    <text evidence="1">Amino-sugar metabolism; N-acetylneuraminate degradation; D-fructose 6-phosphate from N-acetylneuraminate: step 1/5.</text>
</comment>
<comment type="subunit">
    <text evidence="1">Homotetramer.</text>
</comment>
<comment type="subcellular location">
    <subcellularLocation>
        <location evidence="1">Cytoplasm</location>
    </subcellularLocation>
</comment>
<comment type="similarity">
    <text evidence="1">Belongs to the DapA family. NanA subfamily.</text>
</comment>
<accession>A7ZSB8</accession>
<proteinExistence type="inferred from homology"/>
<evidence type="ECO:0000255" key="1">
    <source>
        <dbReference type="HAMAP-Rule" id="MF_01237"/>
    </source>
</evidence>
<sequence>MATNLRGVMAALLTPFDQQQALDKASLRRLVQFNIQQGIDGLYVGGSTGEAFVQSLSEREQVLEIVAEEAKGKIKLIAHVGCVSTAESQQLAASAKRYGFDAVSAVTPFYYPFSFEEHCDHYRAIIDSADGLPMVVYNIPALSGVKLTLDQINTLVTLPGVGALKQTSGDLYQMEQIRREHPDLVLYNGYDEIFASGLLAGADGGIGSTYNIMGWRYQGIVKALKEGDIQTAQKLQTECNKVIDLLIKTGVFRGLKTVLHYMDVVSVPLCRKPFGPVDEKYLPELKALAQQLMQERG</sequence>
<organism>
    <name type="scientific">Escherichia coli O139:H28 (strain E24377A / ETEC)</name>
    <dbReference type="NCBI Taxonomy" id="331111"/>
    <lineage>
        <taxon>Bacteria</taxon>
        <taxon>Pseudomonadati</taxon>
        <taxon>Pseudomonadota</taxon>
        <taxon>Gammaproteobacteria</taxon>
        <taxon>Enterobacterales</taxon>
        <taxon>Enterobacteriaceae</taxon>
        <taxon>Escherichia</taxon>
    </lineage>
</organism>
<gene>
    <name evidence="1" type="primary">nanA</name>
    <name type="ordered locus">EcE24377A_3707</name>
</gene>
<protein>
    <recommendedName>
        <fullName evidence="1">N-acetylneuraminate lyase</fullName>
        <shortName evidence="1">NAL</shortName>
        <shortName evidence="1">Neu5Ac lyase</shortName>
        <ecNumber evidence="1">4.1.3.3</ecNumber>
    </recommendedName>
    <alternativeName>
        <fullName evidence="1">N-acetylneuraminate pyruvate-lyase</fullName>
    </alternativeName>
    <alternativeName>
        <fullName evidence="1">N-acetylneuraminic acid aldolase</fullName>
    </alternativeName>
    <alternativeName>
        <fullName evidence="1">Sialate lyase</fullName>
    </alternativeName>
    <alternativeName>
        <fullName evidence="1">Sialic acid aldolase</fullName>
    </alternativeName>
    <alternativeName>
        <fullName evidence="1">Sialic acid lyase</fullName>
    </alternativeName>
</protein>
<feature type="chain" id="PRO_1000066923" description="N-acetylneuraminate lyase">
    <location>
        <begin position="1"/>
        <end position="297"/>
    </location>
</feature>
<feature type="active site" description="Proton donor" evidence="1">
    <location>
        <position position="137"/>
    </location>
</feature>
<feature type="active site" description="Schiff-base intermediate with substrate" evidence="1">
    <location>
        <position position="165"/>
    </location>
</feature>
<feature type="binding site" evidence="1">
    <location>
        <position position="47"/>
    </location>
    <ligand>
        <name>aceneuramate</name>
        <dbReference type="ChEBI" id="CHEBI:173083"/>
    </ligand>
</feature>
<feature type="binding site" evidence="1">
    <location>
        <position position="48"/>
    </location>
    <ligand>
        <name>aceneuramate</name>
        <dbReference type="ChEBI" id="CHEBI:173083"/>
    </ligand>
</feature>
<feature type="binding site" evidence="1">
    <location>
        <position position="167"/>
    </location>
    <ligand>
        <name>aceneuramate</name>
        <dbReference type="ChEBI" id="CHEBI:173083"/>
    </ligand>
</feature>
<feature type="binding site" evidence="1">
    <location>
        <position position="189"/>
    </location>
    <ligand>
        <name>aceneuramate</name>
        <dbReference type="ChEBI" id="CHEBI:173083"/>
    </ligand>
</feature>
<feature type="binding site" evidence="1">
    <location>
        <position position="191"/>
    </location>
    <ligand>
        <name>aceneuramate</name>
        <dbReference type="ChEBI" id="CHEBI:173083"/>
    </ligand>
</feature>
<feature type="binding site" evidence="1">
    <location>
        <position position="192"/>
    </location>
    <ligand>
        <name>aceneuramate</name>
        <dbReference type="ChEBI" id="CHEBI:173083"/>
    </ligand>
</feature>
<feature type="binding site" evidence="1">
    <location>
        <position position="208"/>
    </location>
    <ligand>
        <name>aceneuramate</name>
        <dbReference type="ChEBI" id="CHEBI:173083"/>
    </ligand>
</feature>
<dbReference type="EC" id="4.1.3.3" evidence="1"/>
<dbReference type="EMBL" id="CP000800">
    <property type="protein sequence ID" value="ABV19848.1"/>
    <property type="molecule type" value="Genomic_DNA"/>
</dbReference>
<dbReference type="RefSeq" id="WP_000224714.1">
    <property type="nucleotide sequence ID" value="NC_009801.1"/>
</dbReference>
<dbReference type="SMR" id="A7ZSB8"/>
<dbReference type="GeneID" id="93778761"/>
<dbReference type="KEGG" id="ecw:EcE24377A_3707"/>
<dbReference type="HOGENOM" id="CLU_049343_6_0_6"/>
<dbReference type="UniPathway" id="UPA00629">
    <property type="reaction ID" value="UER00680"/>
</dbReference>
<dbReference type="Proteomes" id="UP000001122">
    <property type="component" value="Chromosome"/>
</dbReference>
<dbReference type="GO" id="GO:0005829">
    <property type="term" value="C:cytosol"/>
    <property type="evidence" value="ECO:0007669"/>
    <property type="project" value="TreeGrafter"/>
</dbReference>
<dbReference type="GO" id="GO:0008747">
    <property type="term" value="F:N-acetylneuraminate lyase activity"/>
    <property type="evidence" value="ECO:0007669"/>
    <property type="project" value="UniProtKB-UniRule"/>
</dbReference>
<dbReference type="GO" id="GO:0005975">
    <property type="term" value="P:carbohydrate metabolic process"/>
    <property type="evidence" value="ECO:0007669"/>
    <property type="project" value="UniProtKB-UniRule"/>
</dbReference>
<dbReference type="GO" id="GO:0019262">
    <property type="term" value="P:N-acetylneuraminate catabolic process"/>
    <property type="evidence" value="ECO:0007669"/>
    <property type="project" value="UniProtKB-UniRule"/>
</dbReference>
<dbReference type="CDD" id="cd00954">
    <property type="entry name" value="NAL"/>
    <property type="match status" value="1"/>
</dbReference>
<dbReference type="FunFam" id="3.20.20.70:FF:000039">
    <property type="entry name" value="N-acetylneuraminate lyase"/>
    <property type="match status" value="1"/>
</dbReference>
<dbReference type="Gene3D" id="3.20.20.70">
    <property type="entry name" value="Aldolase class I"/>
    <property type="match status" value="1"/>
</dbReference>
<dbReference type="HAMAP" id="MF_01237">
    <property type="entry name" value="N_acetylneuram_lyase"/>
    <property type="match status" value="1"/>
</dbReference>
<dbReference type="InterPro" id="IPR013785">
    <property type="entry name" value="Aldolase_TIM"/>
</dbReference>
<dbReference type="InterPro" id="IPR002220">
    <property type="entry name" value="DapA-like"/>
</dbReference>
<dbReference type="InterPro" id="IPR005264">
    <property type="entry name" value="NanA"/>
</dbReference>
<dbReference type="InterPro" id="IPR020625">
    <property type="entry name" value="Schiff_base-form_aldolases_AS"/>
</dbReference>
<dbReference type="InterPro" id="IPR020624">
    <property type="entry name" value="Schiff_base-form_aldolases_CS"/>
</dbReference>
<dbReference type="NCBIfam" id="TIGR00683">
    <property type="entry name" value="nanA"/>
    <property type="match status" value="1"/>
</dbReference>
<dbReference type="NCBIfam" id="NF003164">
    <property type="entry name" value="PRK04147.1"/>
    <property type="match status" value="1"/>
</dbReference>
<dbReference type="PANTHER" id="PTHR42849">
    <property type="entry name" value="N-ACETYLNEURAMINATE LYASE"/>
    <property type="match status" value="1"/>
</dbReference>
<dbReference type="PANTHER" id="PTHR42849:SF1">
    <property type="entry name" value="N-ACETYLNEURAMINATE LYASE"/>
    <property type="match status" value="1"/>
</dbReference>
<dbReference type="Pfam" id="PF00701">
    <property type="entry name" value="DHDPS"/>
    <property type="match status" value="1"/>
</dbReference>
<dbReference type="PIRSF" id="PIRSF001365">
    <property type="entry name" value="DHDPS"/>
    <property type="match status" value="1"/>
</dbReference>
<dbReference type="PRINTS" id="PR00146">
    <property type="entry name" value="DHPICSNTHASE"/>
</dbReference>
<dbReference type="SMART" id="SM01130">
    <property type="entry name" value="DHDPS"/>
    <property type="match status" value="1"/>
</dbReference>
<dbReference type="SUPFAM" id="SSF51569">
    <property type="entry name" value="Aldolase"/>
    <property type="match status" value="1"/>
</dbReference>
<dbReference type="PROSITE" id="PS00665">
    <property type="entry name" value="DHDPS_1"/>
    <property type="match status" value="1"/>
</dbReference>
<dbReference type="PROSITE" id="PS00666">
    <property type="entry name" value="DHDPS_2"/>
    <property type="match status" value="1"/>
</dbReference>
<keyword id="KW-0119">Carbohydrate metabolism</keyword>
<keyword id="KW-0963">Cytoplasm</keyword>
<keyword id="KW-0456">Lyase</keyword>
<keyword id="KW-1185">Reference proteome</keyword>
<keyword id="KW-0704">Schiff base</keyword>
<name>NANA_ECO24</name>